<reference key="1">
    <citation type="journal article" date="2005" name="Science">
        <title>The transcriptional landscape of the mammalian genome.</title>
        <authorList>
            <person name="Carninci P."/>
            <person name="Kasukawa T."/>
            <person name="Katayama S."/>
            <person name="Gough J."/>
            <person name="Frith M.C."/>
            <person name="Maeda N."/>
            <person name="Oyama R."/>
            <person name="Ravasi T."/>
            <person name="Lenhard B."/>
            <person name="Wells C."/>
            <person name="Kodzius R."/>
            <person name="Shimokawa K."/>
            <person name="Bajic V.B."/>
            <person name="Brenner S.E."/>
            <person name="Batalov S."/>
            <person name="Forrest A.R."/>
            <person name="Zavolan M."/>
            <person name="Davis M.J."/>
            <person name="Wilming L.G."/>
            <person name="Aidinis V."/>
            <person name="Allen J.E."/>
            <person name="Ambesi-Impiombato A."/>
            <person name="Apweiler R."/>
            <person name="Aturaliya R.N."/>
            <person name="Bailey T.L."/>
            <person name="Bansal M."/>
            <person name="Baxter L."/>
            <person name="Beisel K.W."/>
            <person name="Bersano T."/>
            <person name="Bono H."/>
            <person name="Chalk A.M."/>
            <person name="Chiu K.P."/>
            <person name="Choudhary V."/>
            <person name="Christoffels A."/>
            <person name="Clutterbuck D.R."/>
            <person name="Crowe M.L."/>
            <person name="Dalla E."/>
            <person name="Dalrymple B.P."/>
            <person name="de Bono B."/>
            <person name="Della Gatta G."/>
            <person name="di Bernardo D."/>
            <person name="Down T."/>
            <person name="Engstrom P."/>
            <person name="Fagiolini M."/>
            <person name="Faulkner G."/>
            <person name="Fletcher C.F."/>
            <person name="Fukushima T."/>
            <person name="Furuno M."/>
            <person name="Futaki S."/>
            <person name="Gariboldi M."/>
            <person name="Georgii-Hemming P."/>
            <person name="Gingeras T.R."/>
            <person name="Gojobori T."/>
            <person name="Green R.E."/>
            <person name="Gustincich S."/>
            <person name="Harbers M."/>
            <person name="Hayashi Y."/>
            <person name="Hensch T.K."/>
            <person name="Hirokawa N."/>
            <person name="Hill D."/>
            <person name="Huminiecki L."/>
            <person name="Iacono M."/>
            <person name="Ikeo K."/>
            <person name="Iwama A."/>
            <person name="Ishikawa T."/>
            <person name="Jakt M."/>
            <person name="Kanapin A."/>
            <person name="Katoh M."/>
            <person name="Kawasawa Y."/>
            <person name="Kelso J."/>
            <person name="Kitamura H."/>
            <person name="Kitano H."/>
            <person name="Kollias G."/>
            <person name="Krishnan S.P."/>
            <person name="Kruger A."/>
            <person name="Kummerfeld S.K."/>
            <person name="Kurochkin I.V."/>
            <person name="Lareau L.F."/>
            <person name="Lazarevic D."/>
            <person name="Lipovich L."/>
            <person name="Liu J."/>
            <person name="Liuni S."/>
            <person name="McWilliam S."/>
            <person name="Madan Babu M."/>
            <person name="Madera M."/>
            <person name="Marchionni L."/>
            <person name="Matsuda H."/>
            <person name="Matsuzawa S."/>
            <person name="Miki H."/>
            <person name="Mignone F."/>
            <person name="Miyake S."/>
            <person name="Morris K."/>
            <person name="Mottagui-Tabar S."/>
            <person name="Mulder N."/>
            <person name="Nakano N."/>
            <person name="Nakauchi H."/>
            <person name="Ng P."/>
            <person name="Nilsson R."/>
            <person name="Nishiguchi S."/>
            <person name="Nishikawa S."/>
            <person name="Nori F."/>
            <person name="Ohara O."/>
            <person name="Okazaki Y."/>
            <person name="Orlando V."/>
            <person name="Pang K.C."/>
            <person name="Pavan W.J."/>
            <person name="Pavesi G."/>
            <person name="Pesole G."/>
            <person name="Petrovsky N."/>
            <person name="Piazza S."/>
            <person name="Reed J."/>
            <person name="Reid J.F."/>
            <person name="Ring B.Z."/>
            <person name="Ringwald M."/>
            <person name="Rost B."/>
            <person name="Ruan Y."/>
            <person name="Salzberg S.L."/>
            <person name="Sandelin A."/>
            <person name="Schneider C."/>
            <person name="Schoenbach C."/>
            <person name="Sekiguchi K."/>
            <person name="Semple C.A."/>
            <person name="Seno S."/>
            <person name="Sessa L."/>
            <person name="Sheng Y."/>
            <person name="Shibata Y."/>
            <person name="Shimada H."/>
            <person name="Shimada K."/>
            <person name="Silva D."/>
            <person name="Sinclair B."/>
            <person name="Sperling S."/>
            <person name="Stupka E."/>
            <person name="Sugiura K."/>
            <person name="Sultana R."/>
            <person name="Takenaka Y."/>
            <person name="Taki K."/>
            <person name="Tammoja K."/>
            <person name="Tan S.L."/>
            <person name="Tang S."/>
            <person name="Taylor M.S."/>
            <person name="Tegner J."/>
            <person name="Teichmann S.A."/>
            <person name="Ueda H.R."/>
            <person name="van Nimwegen E."/>
            <person name="Verardo R."/>
            <person name="Wei C.L."/>
            <person name="Yagi K."/>
            <person name="Yamanishi H."/>
            <person name="Zabarovsky E."/>
            <person name="Zhu S."/>
            <person name="Zimmer A."/>
            <person name="Hide W."/>
            <person name="Bult C."/>
            <person name="Grimmond S.M."/>
            <person name="Teasdale R.D."/>
            <person name="Liu E.T."/>
            <person name="Brusic V."/>
            <person name="Quackenbush J."/>
            <person name="Wahlestedt C."/>
            <person name="Mattick J.S."/>
            <person name="Hume D.A."/>
            <person name="Kai C."/>
            <person name="Sasaki D."/>
            <person name="Tomaru Y."/>
            <person name="Fukuda S."/>
            <person name="Kanamori-Katayama M."/>
            <person name="Suzuki M."/>
            <person name="Aoki J."/>
            <person name="Arakawa T."/>
            <person name="Iida J."/>
            <person name="Imamura K."/>
            <person name="Itoh M."/>
            <person name="Kato T."/>
            <person name="Kawaji H."/>
            <person name="Kawagashira N."/>
            <person name="Kawashima T."/>
            <person name="Kojima M."/>
            <person name="Kondo S."/>
            <person name="Konno H."/>
            <person name="Nakano K."/>
            <person name="Ninomiya N."/>
            <person name="Nishio T."/>
            <person name="Okada M."/>
            <person name="Plessy C."/>
            <person name="Shibata K."/>
            <person name="Shiraki T."/>
            <person name="Suzuki S."/>
            <person name="Tagami M."/>
            <person name="Waki K."/>
            <person name="Watahiki A."/>
            <person name="Okamura-Oho Y."/>
            <person name="Suzuki H."/>
            <person name="Kawai J."/>
            <person name="Hayashizaki Y."/>
        </authorList>
    </citation>
    <scope>NUCLEOTIDE SEQUENCE [LARGE SCALE MRNA] (ISOFORMS 1 AND 2)</scope>
    <source>
        <strain>C57BL/6J</strain>
        <tissue>Urinary bladder</tissue>
        <tissue>Vagina</tissue>
    </source>
</reference>
<reference key="2">
    <citation type="journal article" date="2004" name="Genome Res.">
        <title>The status, quality, and expansion of the NIH full-length cDNA project: the Mammalian Gene Collection (MGC).</title>
        <authorList>
            <consortium name="The MGC Project Team"/>
        </authorList>
    </citation>
    <scope>NUCLEOTIDE SEQUENCE [LARGE SCALE MRNA] (ISOFORMS 2 AND 3)</scope>
    <source>
        <strain>FVB/N</strain>
        <tissue>Mammary gland</tissue>
        <tissue>Salivary gland</tissue>
    </source>
</reference>
<reference key="3">
    <citation type="journal article" date="2010" name="Cell">
        <title>A tissue-specific atlas of mouse protein phosphorylation and expression.</title>
        <authorList>
            <person name="Huttlin E.L."/>
            <person name="Jedrychowski M.P."/>
            <person name="Elias J.E."/>
            <person name="Goswami T."/>
            <person name="Rad R."/>
            <person name="Beausoleil S.A."/>
            <person name="Villen J."/>
            <person name="Haas W."/>
            <person name="Sowa M.E."/>
            <person name="Gygi S.P."/>
        </authorList>
    </citation>
    <scope>PHOSPHORYLATION [LARGE SCALE ANALYSIS] AT SER-490 AND SER-492</scope>
    <scope>IDENTIFICATION BY MASS SPECTROMETRY [LARGE SCALE ANALYSIS]</scope>
    <source>
        <tissue>Kidney</tissue>
    </source>
</reference>
<reference key="4">
    <citation type="journal article" date="2011" name="Am. J. Hum. Genet.">
        <title>Loss-of-function mutations of ILDR1 cause autosomal-recessive hearing impairment DFNB42.</title>
        <authorList>
            <person name="Borck G."/>
            <person name="Ur Rehman A."/>
            <person name="Lee K."/>
            <person name="Pogoda H.M."/>
            <person name="Kakar N."/>
            <person name="von Ameln S."/>
            <person name="Grillet N."/>
            <person name="Hildebrand M.S."/>
            <person name="Ahmed Z.M."/>
            <person name="Nurnberg G."/>
            <person name="Ansar M."/>
            <person name="Basit S."/>
            <person name="Javed Q."/>
            <person name="Morell R.J."/>
            <person name="Nasreen N."/>
            <person name="Shearer A.E."/>
            <person name="Ahmad A."/>
            <person name="Kahrizi K."/>
            <person name="Shaikh R.S."/>
            <person name="Ali R.A."/>
            <person name="Khan S.N."/>
            <person name="Goebel I."/>
            <person name="Meyer N.C."/>
            <person name="Kimberling W.J."/>
            <person name="Webster J.A."/>
            <person name="Stephan D.A."/>
            <person name="Schiller M.R."/>
            <person name="Bahlo M."/>
            <person name="Najmabadi H."/>
            <person name="Gillespie P.G."/>
            <person name="Nurnberg P."/>
            <person name="Wollnik B."/>
            <person name="Riazuddin S."/>
            <person name="Smith R.J."/>
            <person name="Ahmad W."/>
            <person name="Muller U."/>
            <person name="Hammerschmidt M."/>
            <person name="Friedman T.B."/>
            <person name="Riazuddin S."/>
            <person name="Leal S.M."/>
            <person name="Ahmad J."/>
            <person name="Kubisch C."/>
        </authorList>
    </citation>
    <scope>DEVELOPMENTAL STAGE</scope>
    <scope>TISSUE SPECIFICITY</scope>
</reference>
<reference key="5">
    <citation type="journal article" date="2013" name="J. Clin. Invest.">
        <title>Immunoglobulin-like domain containing receptor 1 mediates fat-stimulated cholecystokinin secretion.</title>
        <authorList>
            <person name="Chandra R."/>
            <person name="Wang Y."/>
            <person name="Shahid R.A."/>
            <person name="Vigna S.R."/>
            <person name="Freedman N.J."/>
            <person name="Liddle R.A."/>
        </authorList>
    </citation>
    <scope>FUNCTION</scope>
    <scope>DISRUPTION PHENOTYPE</scope>
    <scope>TISSUE SPECIFICITY</scope>
</reference>
<reference key="6">
    <citation type="journal article" date="2013" name="J. Cell Sci.">
        <title>Analysis of the 'angulin' proteins LSR, ILDR1 and ILDR2--tricellulin recruitment, epithelial barrier function and implication in deafness pathogenesis.</title>
        <authorList>
            <person name="Higashi T."/>
            <person name="Tokuda S."/>
            <person name="Kitajiri S."/>
            <person name="Masuda S."/>
            <person name="Nakamura H."/>
            <person name="Oda Y."/>
            <person name="Furuse M."/>
        </authorList>
    </citation>
    <scope>FUNCTION</scope>
    <scope>TISSUE SPECIFICITY</scope>
    <scope>SUBCELLULAR LOCATION</scope>
    <scope>INTERACTION WITH MARVELD2 AND OCLN</scope>
</reference>
<reference key="7">
    <citation type="journal article" date="2015" name="Hum. Mol. Genet.">
        <title>ILDR1 null mice, a model of human deafness DFNB42, show structural aberrations of tricellular tight junctions and degeneration of auditory hair cells.</title>
        <authorList>
            <person name="Morozko E.L."/>
            <person name="Nishio A."/>
            <person name="Ingham N.J."/>
            <person name="Chandra R."/>
            <person name="Fitzgerald T."/>
            <person name="Martelletti E."/>
            <person name="Borck G."/>
            <person name="Wilson E."/>
            <person name="Riordan G.P."/>
            <person name="Wangemann P."/>
            <person name="Forge A."/>
            <person name="Steel K.P."/>
            <person name="Liddle R.A."/>
            <person name="Friedman T.B."/>
            <person name="Belyantseva I.A."/>
        </authorList>
    </citation>
    <scope>FUNCTION</scope>
    <scope>DISRUPTION PHENOTYPE</scope>
    <scope>SUBCELLULAR LOCATION</scope>
    <scope>TISSUE SPECIFICITY</scope>
</reference>
<reference key="8">
    <citation type="journal article" date="2017" name="Sci. Rep.">
        <title>Angulin proteins ILDR1 and ILDR2 regulate alternative pre-mRNA splicing through binding to splicing factors TRA2A, TRA2B, or SRSF1.</title>
        <authorList>
            <person name="Liu Y."/>
            <person name="Nie H."/>
            <person name="Liu C."/>
            <person name="Zhai X."/>
            <person name="Sang Q."/>
            <person name="Wang Y."/>
            <person name="Shi D."/>
            <person name="Wang L."/>
            <person name="Xu Z."/>
        </authorList>
    </citation>
    <scope>FUNCTION</scope>
    <scope>INTERACTION WITH TRA2A; TRA2B AND SRSF1</scope>
    <scope>SUBCELLULAR LOCATION</scope>
</reference>
<feature type="signal peptide" evidence="2">
    <location>
        <begin position="1"/>
        <end position="22"/>
    </location>
</feature>
<feature type="chain" id="PRO_0000245305" description="Immunoglobulin-like domain-containing receptor 1">
    <location>
        <begin position="23"/>
        <end position="537"/>
    </location>
</feature>
<feature type="topological domain" description="Extracellular" evidence="2">
    <location>
        <begin position="23"/>
        <end position="166"/>
    </location>
</feature>
<feature type="transmembrane region" description="Helical" evidence="2">
    <location>
        <begin position="167"/>
        <end position="187"/>
    </location>
</feature>
<feature type="topological domain" description="Cytoplasmic" evidence="2">
    <location>
        <begin position="188"/>
        <end position="537"/>
    </location>
</feature>
<feature type="domain" description="Ig-like V-type">
    <location>
        <begin position="23"/>
        <end position="161"/>
    </location>
</feature>
<feature type="region of interest" description="Disordered" evidence="4">
    <location>
        <begin position="333"/>
        <end position="537"/>
    </location>
</feature>
<feature type="compositionally biased region" description="Polar residues" evidence="4">
    <location>
        <begin position="341"/>
        <end position="357"/>
    </location>
</feature>
<feature type="compositionally biased region" description="Basic and acidic residues" evidence="4">
    <location>
        <begin position="359"/>
        <end position="380"/>
    </location>
</feature>
<feature type="compositionally biased region" description="Basic and acidic residues" evidence="4">
    <location>
        <begin position="434"/>
        <end position="444"/>
    </location>
</feature>
<feature type="compositionally biased region" description="Basic residues" evidence="4">
    <location>
        <begin position="480"/>
        <end position="490"/>
    </location>
</feature>
<feature type="compositionally biased region" description="Basic and acidic residues" evidence="4">
    <location>
        <begin position="518"/>
        <end position="530"/>
    </location>
</feature>
<feature type="modified residue" description="Phosphoserine" evidence="16">
    <location>
        <position position="490"/>
    </location>
</feature>
<feature type="modified residue" description="Phosphoserine" evidence="16">
    <location>
        <position position="492"/>
    </location>
</feature>
<feature type="disulfide bond" evidence="3">
    <location>
        <begin position="44"/>
        <end position="144"/>
    </location>
</feature>
<feature type="splice variant" id="VSP_019688" description="In isoform 3." evidence="10">
    <location>
        <begin position="215"/>
        <end position="258"/>
    </location>
</feature>
<feature type="splice variant" id="VSP_019689" description="In isoform 2." evidence="10 11">
    <original>KNNRK</original>
    <variation>ERELP</variation>
    <location>
        <begin position="512"/>
        <end position="516"/>
    </location>
</feature>
<feature type="splice variant" id="VSP_019690" description="In isoform 2." evidence="10 11">
    <location>
        <begin position="517"/>
        <end position="537"/>
    </location>
</feature>
<feature type="sequence conflict" description="In Ref. 1; BAC29604." evidence="14" ref="1">
    <original>V</original>
    <variation>L</variation>
    <location>
        <position position="25"/>
    </location>
</feature>
<feature type="sequence conflict" description="In Ref. 1; BAC29081." evidence="14" ref="1">
    <original>D</original>
    <variation>G</variation>
    <location>
        <position position="71"/>
    </location>
</feature>
<name>ILDR1_MOUSE</name>
<sequence>MGCGLLAAGLLLFTWLPAGCLSLLVTVQHTERYVTLFASVTLKCDYTTSAQLQDVVVTWRFKSFCKDPIFDYFSASYQAALSLGQDPSNDCSDNQREVRIVAQRRGQSEPVLGVDYRQRKITIQNRADLVINEVMWWDHGVYYCTIEAPGDTSGDPDKEVKLIVLHWLTVIFIILGALLLLLLIGVCWCQCCPQYCCCYIRCPCCPTRCCCPEEALARHRYMKQVQALGPQMMEKPLYWGADRSSQVSSYAMNPLLQRDLSLQSSLPQMPMTQMAAHPPVANGVLEYLEKELRNLNPAQPLPADLRAKSGHPCSMLSSLGSAEVVERRVIHLPPLIRDPPSSRTSNPSHQQRLNAVSSRHCDLSERPRQRHHSDFLRELQDQGMRPWAPGRGELDPHWSGRHHRSRPSESSMPWSDWDSLSECPSSSEAPWPPRRPEPREGAQRRERRRHRSYSPPLPSGPSSWSSEEEKESLPRNWGAQRRHHHRRRRSQSPNWPEEKPPSYRSLDVTPGKNNRKKGNVERRLERESSHSGRSVVI</sequence>
<accession>Q8CBR1</accession>
<accession>Q6PFB3</accession>
<accession>Q8CB39</accession>
<accession>Q91VS0</accession>
<protein>
    <recommendedName>
        <fullName evidence="14">Immunoglobulin-like domain-containing receptor 1</fullName>
    </recommendedName>
    <alternativeName>
        <fullName evidence="12 13">Angulin-2</fullName>
    </alternativeName>
</protein>
<comment type="function">
    <text evidence="6 7 8 9">Maintains epithelial barrier function by recruiting MARVELD2/tricellulin to tricellular tight junctions (tTJs) (PubMed:23239027). Crucial for normal hearing by maintaining the structural and functional integrity of tTJs, which are critical for the survival of auditory neurosensory HCs (PubMed:25217574). Mediates fatty acids and lipoproteins-stimulated CCK/cholecystokinin secretion in the small intestine (PubMed:23863714). In the inner ear, may regulate alternative pre-mRNA splicing via binding to TRA2A, TRA2B and SRSF1 (PubMed:28785060).</text>
</comment>
<comment type="subunit">
    <text evidence="1 6 9">Homooligomer (By similarity). Interacts with MARVELD2 and OCLN; the interaction is required to recruit MARVELD2 to tricellular contacts (PubMed:23239027). Interacts (via C-terminus) with TRA2A, TRA2B and SRSF1 (PubMed:28785060). Interacts with PLSCR1 (By similarity).</text>
</comment>
<comment type="subcellular location">
    <subcellularLocation>
        <location evidence="6 8">Cell membrane</location>
        <topology evidence="2">Single-pass type I membrane protein</topology>
    </subcellularLocation>
    <subcellularLocation>
        <location evidence="6 8">Cell junction</location>
        <location evidence="6 8">Tight junction</location>
    </subcellularLocation>
    <subcellularLocation>
        <location evidence="9">Nucleus</location>
    </subcellularLocation>
    <subcellularLocation>
        <location evidence="1">Cytoplasm</location>
    </subcellularLocation>
    <text evidence="6 8">Localizes to tricellular tight junctions (tTJs) between epithelial cells.</text>
</comment>
<comment type="alternative products">
    <event type="alternative splicing"/>
    <isoform>
        <id>Q8CBR1-1</id>
        <name>1</name>
        <name evidence="13">Alpha</name>
        <sequence type="displayed"/>
    </isoform>
    <isoform>
        <id>Q8CBR1-2</id>
        <name>2</name>
        <sequence type="described" ref="VSP_019689 VSP_019690"/>
    </isoform>
    <isoform>
        <id>Q8CBR1-3</id>
        <name>3</name>
        <sequence type="described" ref="VSP_019688"/>
    </isoform>
</comment>
<comment type="tissue specificity">
    <text evidence="5 6 7 8">Expressed in the vestibule and in hair cells and supporting cells of the cochlea. Expressed in epithelial tissues. Highly expressed in colon but also detected in small intestine, bladder and lung (PubMed:23239027). In colon, expressed in the upper portion of the crypts (at protein level) (PubMed:23239027). Expressed in CCK secretory cells of the proximal small intestine (at protein level) (PubMed:23863714). Expressed in the organ of Corti, stria vascularis, utricle and saccule of the inner ear (PubMed:23239027, PubMed:25217574).</text>
</comment>
<comment type="developmental stage">
    <text evidence="5">Expressed early in development.</text>
</comment>
<comment type="disruption phenotype">
    <text evidence="7 8">Mutant mice have early-onset severe deafness associated with a rapid degeneration of cochlear hair cells but have a normal endocochlear potential (PubMed:25217574). Mutants show no increase in plasma CCK levels after orogastric gavage with fatty acids (PubMed:23863714).</text>
</comment>
<comment type="similarity">
    <text evidence="14">Belongs to the immunoglobulin superfamily. LISCH7 family.</text>
</comment>
<evidence type="ECO:0000250" key="1">
    <source>
        <dbReference type="UniProtKB" id="Q86SU0"/>
    </source>
</evidence>
<evidence type="ECO:0000255" key="2"/>
<evidence type="ECO:0000255" key="3">
    <source>
        <dbReference type="PROSITE-ProRule" id="PRU00114"/>
    </source>
</evidence>
<evidence type="ECO:0000256" key="4">
    <source>
        <dbReference type="SAM" id="MobiDB-lite"/>
    </source>
</evidence>
<evidence type="ECO:0000269" key="5">
    <source>
    </source>
</evidence>
<evidence type="ECO:0000269" key="6">
    <source>
    </source>
</evidence>
<evidence type="ECO:0000269" key="7">
    <source>
    </source>
</evidence>
<evidence type="ECO:0000269" key="8">
    <source>
    </source>
</evidence>
<evidence type="ECO:0000269" key="9">
    <source>
    </source>
</evidence>
<evidence type="ECO:0000303" key="10">
    <source>
    </source>
</evidence>
<evidence type="ECO:0000303" key="11">
    <source>
    </source>
</evidence>
<evidence type="ECO:0000303" key="12">
    <source>
    </source>
</evidence>
<evidence type="ECO:0000303" key="13">
    <source>
    </source>
</evidence>
<evidence type="ECO:0000305" key="14"/>
<evidence type="ECO:0000312" key="15">
    <source>
        <dbReference type="MGI" id="MGI:2146574"/>
    </source>
</evidence>
<evidence type="ECO:0007744" key="16">
    <source>
    </source>
</evidence>
<proteinExistence type="evidence at protein level"/>
<keyword id="KW-0025">Alternative splicing</keyword>
<keyword id="KW-0965">Cell junction</keyword>
<keyword id="KW-1003">Cell membrane</keyword>
<keyword id="KW-0963">Cytoplasm</keyword>
<keyword id="KW-1015">Disulfide bond</keyword>
<keyword id="KW-0393">Immunoglobulin domain</keyword>
<keyword id="KW-0472">Membrane</keyword>
<keyword id="KW-0539">Nucleus</keyword>
<keyword id="KW-0597">Phosphoprotein</keyword>
<keyword id="KW-0675">Receptor</keyword>
<keyword id="KW-1185">Reference proteome</keyword>
<keyword id="KW-0732">Signal</keyword>
<keyword id="KW-0796">Tight junction</keyword>
<keyword id="KW-0812">Transmembrane</keyword>
<keyword id="KW-1133">Transmembrane helix</keyword>
<dbReference type="EMBL" id="AK035504">
    <property type="protein sequence ID" value="BAC29081.1"/>
    <property type="molecule type" value="mRNA"/>
</dbReference>
<dbReference type="EMBL" id="AK036844">
    <property type="protein sequence ID" value="BAC29604.1"/>
    <property type="molecule type" value="mRNA"/>
</dbReference>
<dbReference type="EMBL" id="BC010485">
    <property type="protein sequence ID" value="AAH10485.1"/>
    <property type="molecule type" value="mRNA"/>
</dbReference>
<dbReference type="EMBL" id="BC057644">
    <property type="protein sequence ID" value="AAH57644.1"/>
    <property type="molecule type" value="mRNA"/>
</dbReference>
<dbReference type="CCDS" id="CCDS49841.1">
    <molecule id="Q8CBR1-2"/>
</dbReference>
<dbReference type="CCDS" id="CCDS70718.1">
    <molecule id="Q8CBR1-1"/>
</dbReference>
<dbReference type="CCDS" id="CCDS70719.1">
    <molecule id="Q8CBR1-3"/>
</dbReference>
<dbReference type="RefSeq" id="NP_001272717.1">
    <molecule id="Q8CBR1-1"/>
    <property type="nucleotide sequence ID" value="NM_001285788.1"/>
</dbReference>
<dbReference type="RefSeq" id="NP_001272720.1">
    <molecule id="Q8CBR1-3"/>
    <property type="nucleotide sequence ID" value="NM_001285791.1"/>
</dbReference>
<dbReference type="RefSeq" id="NP_598870.1">
    <molecule id="Q8CBR1-2"/>
    <property type="nucleotide sequence ID" value="NM_134109.2"/>
</dbReference>
<dbReference type="FunCoup" id="Q8CBR1">
    <property type="interactions" value="85"/>
</dbReference>
<dbReference type="STRING" id="10090.ENSMUSP00000023617"/>
<dbReference type="GlyGen" id="Q8CBR1">
    <property type="glycosylation" value="2 sites, 1 O-linked glycan (1 site)"/>
</dbReference>
<dbReference type="iPTMnet" id="Q8CBR1"/>
<dbReference type="PhosphoSitePlus" id="Q8CBR1"/>
<dbReference type="jPOST" id="Q8CBR1"/>
<dbReference type="PaxDb" id="10090-ENSMUSP00000112539"/>
<dbReference type="ProteomicsDB" id="266971">
    <molecule id="Q8CBR1-1"/>
</dbReference>
<dbReference type="ProteomicsDB" id="266972">
    <molecule id="Q8CBR1-2"/>
</dbReference>
<dbReference type="ProteomicsDB" id="266973">
    <molecule id="Q8CBR1-3"/>
</dbReference>
<dbReference type="ABCD" id="Q8CBR1">
    <property type="antibodies" value="20 sequenced antibodies"/>
</dbReference>
<dbReference type="Antibodypedia" id="3021">
    <property type="antibodies" value="67 antibodies from 14 providers"/>
</dbReference>
<dbReference type="DNASU" id="106347"/>
<dbReference type="Ensembl" id="ENSMUST00000023617.13">
    <molecule id="Q8CBR1-1"/>
    <property type="protein sequence ID" value="ENSMUSP00000023617.7"/>
    <property type="gene ID" value="ENSMUSG00000022900.15"/>
</dbReference>
<dbReference type="Ensembl" id="ENSMUST00000089618.10">
    <molecule id="Q8CBR1-3"/>
    <property type="protein sequence ID" value="ENSMUSP00000087045.4"/>
    <property type="gene ID" value="ENSMUSG00000022900.15"/>
</dbReference>
<dbReference type="Ensembl" id="ENSMUST00000119464.2">
    <molecule id="Q8CBR1-2"/>
    <property type="protein sequence ID" value="ENSMUSP00000112539.2"/>
    <property type="gene ID" value="ENSMUSG00000022900.15"/>
</dbReference>
<dbReference type="GeneID" id="106347"/>
<dbReference type="KEGG" id="mmu:106347"/>
<dbReference type="UCSC" id="uc007zcs.2">
    <molecule id="Q8CBR1-2"/>
    <property type="organism name" value="mouse"/>
</dbReference>
<dbReference type="UCSC" id="uc007zct.2">
    <molecule id="Q8CBR1-1"/>
    <property type="organism name" value="mouse"/>
</dbReference>
<dbReference type="UCSC" id="uc007zcu.2">
    <molecule id="Q8CBR1-3"/>
    <property type="organism name" value="mouse"/>
</dbReference>
<dbReference type="AGR" id="MGI:2146574"/>
<dbReference type="CTD" id="286676"/>
<dbReference type="MGI" id="MGI:2146574">
    <property type="gene designation" value="Ildr1"/>
</dbReference>
<dbReference type="VEuPathDB" id="HostDB:ENSMUSG00000022900"/>
<dbReference type="eggNOG" id="ENOG502QS11">
    <property type="taxonomic scope" value="Eukaryota"/>
</dbReference>
<dbReference type="GeneTree" id="ENSGT00950000183058"/>
<dbReference type="HOGENOM" id="CLU_037131_1_0_1"/>
<dbReference type="InParanoid" id="Q8CBR1"/>
<dbReference type="OMA" id="TRCCCNQ"/>
<dbReference type="OrthoDB" id="9944507at2759"/>
<dbReference type="PhylomeDB" id="Q8CBR1"/>
<dbReference type="TreeFam" id="TF330877"/>
<dbReference type="BioGRID-ORCS" id="106347">
    <property type="hits" value="1 hit in 76 CRISPR screens"/>
</dbReference>
<dbReference type="ChiTaRS" id="Ildr1">
    <property type="organism name" value="mouse"/>
</dbReference>
<dbReference type="PRO" id="PR:Q8CBR1"/>
<dbReference type="Proteomes" id="UP000000589">
    <property type="component" value="Chromosome 16"/>
</dbReference>
<dbReference type="RNAct" id="Q8CBR1">
    <property type="molecule type" value="protein"/>
</dbReference>
<dbReference type="Bgee" id="ENSMUSG00000022900">
    <property type="expression patterns" value="Expressed in parotid gland and 81 other cell types or tissues"/>
</dbReference>
<dbReference type="GO" id="GO:0005923">
    <property type="term" value="C:bicellular tight junction"/>
    <property type="evidence" value="ECO:0007669"/>
    <property type="project" value="UniProtKB-SubCell"/>
</dbReference>
<dbReference type="GO" id="GO:0005737">
    <property type="term" value="C:cytoplasm"/>
    <property type="evidence" value="ECO:0007669"/>
    <property type="project" value="UniProtKB-SubCell"/>
</dbReference>
<dbReference type="GO" id="GO:0005634">
    <property type="term" value="C:nucleus"/>
    <property type="evidence" value="ECO:0007669"/>
    <property type="project" value="UniProtKB-SubCell"/>
</dbReference>
<dbReference type="GO" id="GO:0005886">
    <property type="term" value="C:plasma membrane"/>
    <property type="evidence" value="ECO:0000314"/>
    <property type="project" value="MGI"/>
</dbReference>
<dbReference type="GO" id="GO:0032991">
    <property type="term" value="C:protein-containing complex"/>
    <property type="evidence" value="ECO:0007669"/>
    <property type="project" value="Ensembl"/>
</dbReference>
<dbReference type="GO" id="GO:0070160">
    <property type="term" value="C:tight junction"/>
    <property type="evidence" value="ECO:0000314"/>
    <property type="project" value="UniProtKB"/>
</dbReference>
<dbReference type="GO" id="GO:0061689">
    <property type="term" value="C:tricellular tight junction"/>
    <property type="evidence" value="ECO:0000314"/>
    <property type="project" value="CACAO"/>
</dbReference>
<dbReference type="GO" id="GO:0070506">
    <property type="term" value="F:high-density lipoprotein particle receptor activity"/>
    <property type="evidence" value="ECO:0000314"/>
    <property type="project" value="MGI"/>
</dbReference>
<dbReference type="GO" id="GO:0042802">
    <property type="term" value="F:identical protein binding"/>
    <property type="evidence" value="ECO:0007669"/>
    <property type="project" value="Ensembl"/>
</dbReference>
<dbReference type="GO" id="GO:1990830">
    <property type="term" value="P:cellular response to leukemia inhibitory factor"/>
    <property type="evidence" value="ECO:0000270"/>
    <property type="project" value="MGI"/>
</dbReference>
<dbReference type="GO" id="GO:0010669">
    <property type="term" value="P:epithelial structure maintenance"/>
    <property type="evidence" value="ECO:0000314"/>
    <property type="project" value="UniProtKB"/>
</dbReference>
<dbReference type="GO" id="GO:0051649">
    <property type="term" value="P:establishment of localization in cell"/>
    <property type="evidence" value="ECO:0000314"/>
    <property type="project" value="MGI"/>
</dbReference>
<dbReference type="GO" id="GO:0030072">
    <property type="term" value="P:peptide hormone secretion"/>
    <property type="evidence" value="ECO:0000314"/>
    <property type="project" value="MGI"/>
</dbReference>
<dbReference type="GO" id="GO:0090277">
    <property type="term" value="P:positive regulation of peptide hormone secretion"/>
    <property type="evidence" value="ECO:0000314"/>
    <property type="project" value="MGI"/>
</dbReference>
<dbReference type="GO" id="GO:0061833">
    <property type="term" value="P:protein localization to tricellular tight junction"/>
    <property type="evidence" value="ECO:0000315"/>
    <property type="project" value="UniProtKB"/>
</dbReference>
<dbReference type="GO" id="GO:0043484">
    <property type="term" value="P:regulation of RNA splicing"/>
    <property type="evidence" value="ECO:0000315"/>
    <property type="project" value="UniProtKB"/>
</dbReference>
<dbReference type="GO" id="GO:0070542">
    <property type="term" value="P:response to fatty acid"/>
    <property type="evidence" value="ECO:0000315"/>
    <property type="project" value="UniProtKB"/>
</dbReference>
<dbReference type="GO" id="GO:1904274">
    <property type="term" value="P:tricellular tight junction assembly"/>
    <property type="evidence" value="ECO:0000315"/>
    <property type="project" value="UniProtKB"/>
</dbReference>
<dbReference type="Gene3D" id="2.60.40.10">
    <property type="entry name" value="Immunoglobulins"/>
    <property type="match status" value="1"/>
</dbReference>
<dbReference type="InterPro" id="IPR007110">
    <property type="entry name" value="Ig-like_dom"/>
</dbReference>
<dbReference type="InterPro" id="IPR036179">
    <property type="entry name" value="Ig-like_dom_sf"/>
</dbReference>
<dbReference type="InterPro" id="IPR051874">
    <property type="entry name" value="Ig-like_domain-LISCH7"/>
</dbReference>
<dbReference type="InterPro" id="IPR013783">
    <property type="entry name" value="Ig-like_fold"/>
</dbReference>
<dbReference type="InterPro" id="IPR003599">
    <property type="entry name" value="Ig_sub"/>
</dbReference>
<dbReference type="InterPro" id="IPR008664">
    <property type="entry name" value="LISCH7"/>
</dbReference>
<dbReference type="PANTHER" id="PTHR15923:SF3">
    <property type="entry name" value="IMMUNOGLOBULIN-LIKE DOMAIN-CONTAINING RECEPTOR 1"/>
    <property type="match status" value="1"/>
</dbReference>
<dbReference type="PANTHER" id="PTHR15923">
    <property type="entry name" value="TRANSMEMBRANE AND IMMUNOGLOBULIN DOMAIN-CONTAINING PROTEIN"/>
    <property type="match status" value="1"/>
</dbReference>
<dbReference type="Pfam" id="PF05624">
    <property type="entry name" value="LSR"/>
    <property type="match status" value="1"/>
</dbReference>
<dbReference type="SMART" id="SM00409">
    <property type="entry name" value="IG"/>
    <property type="match status" value="1"/>
</dbReference>
<dbReference type="SUPFAM" id="SSF48726">
    <property type="entry name" value="Immunoglobulin"/>
    <property type="match status" value="1"/>
</dbReference>
<dbReference type="PROSITE" id="PS50835">
    <property type="entry name" value="IG_LIKE"/>
    <property type="match status" value="1"/>
</dbReference>
<organism>
    <name type="scientific">Mus musculus</name>
    <name type="common">Mouse</name>
    <dbReference type="NCBI Taxonomy" id="10090"/>
    <lineage>
        <taxon>Eukaryota</taxon>
        <taxon>Metazoa</taxon>
        <taxon>Chordata</taxon>
        <taxon>Craniata</taxon>
        <taxon>Vertebrata</taxon>
        <taxon>Euteleostomi</taxon>
        <taxon>Mammalia</taxon>
        <taxon>Eutheria</taxon>
        <taxon>Euarchontoglires</taxon>
        <taxon>Glires</taxon>
        <taxon>Rodentia</taxon>
        <taxon>Myomorpha</taxon>
        <taxon>Muroidea</taxon>
        <taxon>Muridae</taxon>
        <taxon>Murinae</taxon>
        <taxon>Mus</taxon>
        <taxon>Mus</taxon>
    </lineage>
</organism>
<gene>
    <name evidence="15" type="primary">Ildr1</name>
</gene>